<proteinExistence type="inferred from homology"/>
<gene>
    <name type="ordered locus">CbuG_2096</name>
</gene>
<name>YQGF_COXB2</name>
<feature type="chain" id="PRO_1000131018" description="Putative pre-16S rRNA nuclease">
    <location>
        <begin position="1"/>
        <end position="141"/>
    </location>
</feature>
<dbReference type="EC" id="3.1.-.-" evidence="1"/>
<dbReference type="EMBL" id="CP001019">
    <property type="protein sequence ID" value="ACJ19329.1"/>
    <property type="molecule type" value="Genomic_DNA"/>
</dbReference>
<dbReference type="RefSeq" id="WP_011997468.1">
    <property type="nucleotide sequence ID" value="NC_011527.1"/>
</dbReference>
<dbReference type="SMR" id="B6J3V7"/>
<dbReference type="KEGG" id="cbg:CbuG_2096"/>
<dbReference type="HOGENOM" id="CLU_098240_3_0_6"/>
<dbReference type="GO" id="GO:0005829">
    <property type="term" value="C:cytosol"/>
    <property type="evidence" value="ECO:0007669"/>
    <property type="project" value="TreeGrafter"/>
</dbReference>
<dbReference type="GO" id="GO:0004518">
    <property type="term" value="F:nuclease activity"/>
    <property type="evidence" value="ECO:0007669"/>
    <property type="project" value="UniProtKB-KW"/>
</dbReference>
<dbReference type="GO" id="GO:0000967">
    <property type="term" value="P:rRNA 5'-end processing"/>
    <property type="evidence" value="ECO:0007669"/>
    <property type="project" value="UniProtKB-UniRule"/>
</dbReference>
<dbReference type="CDD" id="cd16964">
    <property type="entry name" value="YqgF"/>
    <property type="match status" value="1"/>
</dbReference>
<dbReference type="FunFam" id="3.30.420.140:FF:000022">
    <property type="entry name" value="Putative pre-16S rRNA nuclease"/>
    <property type="match status" value="1"/>
</dbReference>
<dbReference type="Gene3D" id="3.30.420.140">
    <property type="entry name" value="YqgF/RNase H-like domain"/>
    <property type="match status" value="1"/>
</dbReference>
<dbReference type="HAMAP" id="MF_00651">
    <property type="entry name" value="Nuclease_YqgF"/>
    <property type="match status" value="1"/>
</dbReference>
<dbReference type="InterPro" id="IPR012337">
    <property type="entry name" value="RNaseH-like_sf"/>
</dbReference>
<dbReference type="InterPro" id="IPR005227">
    <property type="entry name" value="YqgF"/>
</dbReference>
<dbReference type="InterPro" id="IPR006641">
    <property type="entry name" value="YqgF/RNaseH-like_dom"/>
</dbReference>
<dbReference type="InterPro" id="IPR037027">
    <property type="entry name" value="YqgF/RNaseH-like_dom_sf"/>
</dbReference>
<dbReference type="NCBIfam" id="TIGR00250">
    <property type="entry name" value="RNAse_H_YqgF"/>
    <property type="match status" value="1"/>
</dbReference>
<dbReference type="PANTHER" id="PTHR33317">
    <property type="entry name" value="POLYNUCLEOTIDYL TRANSFERASE, RIBONUCLEASE H-LIKE SUPERFAMILY PROTEIN"/>
    <property type="match status" value="1"/>
</dbReference>
<dbReference type="PANTHER" id="PTHR33317:SF4">
    <property type="entry name" value="POLYNUCLEOTIDYL TRANSFERASE, RIBONUCLEASE H-LIKE SUPERFAMILY PROTEIN"/>
    <property type="match status" value="1"/>
</dbReference>
<dbReference type="Pfam" id="PF03652">
    <property type="entry name" value="RuvX"/>
    <property type="match status" value="1"/>
</dbReference>
<dbReference type="SMART" id="SM00732">
    <property type="entry name" value="YqgFc"/>
    <property type="match status" value="1"/>
</dbReference>
<dbReference type="SUPFAM" id="SSF53098">
    <property type="entry name" value="Ribonuclease H-like"/>
    <property type="match status" value="1"/>
</dbReference>
<reference key="1">
    <citation type="journal article" date="2009" name="Infect. Immun.">
        <title>Comparative genomics reveal extensive transposon-mediated genomic plasticity and diversity among potential effector proteins within the genus Coxiella.</title>
        <authorList>
            <person name="Beare P.A."/>
            <person name="Unsworth N."/>
            <person name="Andoh M."/>
            <person name="Voth D.E."/>
            <person name="Omsland A."/>
            <person name="Gilk S.D."/>
            <person name="Williams K.P."/>
            <person name="Sobral B.W."/>
            <person name="Kupko J.J. III"/>
            <person name="Porcella S.F."/>
            <person name="Samuel J.E."/>
            <person name="Heinzen R.A."/>
        </authorList>
    </citation>
    <scope>NUCLEOTIDE SEQUENCE [LARGE SCALE GENOMIC DNA]</scope>
    <source>
        <strain>CbuG_Q212</strain>
    </source>
</reference>
<protein>
    <recommendedName>
        <fullName evidence="1">Putative pre-16S rRNA nuclease</fullName>
        <ecNumber evidence="1">3.1.-.-</ecNumber>
    </recommendedName>
</protein>
<keyword id="KW-0963">Cytoplasm</keyword>
<keyword id="KW-0378">Hydrolase</keyword>
<keyword id="KW-0540">Nuclease</keyword>
<keyword id="KW-0690">Ribosome biogenesis</keyword>
<accession>B6J3V7</accession>
<comment type="function">
    <text evidence="1">Could be a nuclease involved in processing of the 5'-end of pre-16S rRNA.</text>
</comment>
<comment type="subcellular location">
    <subcellularLocation>
        <location evidence="1">Cytoplasm</location>
    </subcellularLocation>
</comment>
<comment type="similarity">
    <text evidence="1">Belongs to the YqgF nuclease family.</text>
</comment>
<evidence type="ECO:0000255" key="1">
    <source>
        <dbReference type="HAMAP-Rule" id="MF_00651"/>
    </source>
</evidence>
<sequence>MPNQNLIALGFDFGMKRIGVAVGQTVTHSANAIAILKAQDGVPDWEKIKMLIETWHANVLVVGIPYNMDGSEQTLTFAARKFARKLQTRFGLPVSMVDERLTTIEAKRQWYEQGLTKRPQHLDNYAAKLILEQWLQEQKNE</sequence>
<organism>
    <name type="scientific">Coxiella burnetii (strain CbuG_Q212)</name>
    <name type="common">Coxiella burnetii (strain Q212)</name>
    <dbReference type="NCBI Taxonomy" id="434923"/>
    <lineage>
        <taxon>Bacteria</taxon>
        <taxon>Pseudomonadati</taxon>
        <taxon>Pseudomonadota</taxon>
        <taxon>Gammaproteobacteria</taxon>
        <taxon>Legionellales</taxon>
        <taxon>Coxiellaceae</taxon>
        <taxon>Coxiella</taxon>
    </lineage>
</organism>